<feature type="chain" id="PRO_0000000875" description="Choline dehydrogenase">
    <location>
        <begin position="1"/>
        <end position="402"/>
    </location>
</feature>
<feature type="splice variant" id="VSP_018637" description="In isoform Short." evidence="5">
    <location>
        <begin position="1"/>
        <end position="9"/>
    </location>
</feature>
<comment type="function">
    <text evidence="2">Involved in the biosynthesis of the osmoprotectant glycine betaine from choline.</text>
</comment>
<comment type="catalytic activity">
    <reaction evidence="5">
        <text>choline + NAD(+) = betaine aldehyde + NADH + H(+)</text>
        <dbReference type="Rhea" id="RHEA:33051"/>
        <dbReference type="ChEBI" id="CHEBI:15354"/>
        <dbReference type="ChEBI" id="CHEBI:15378"/>
        <dbReference type="ChEBI" id="CHEBI:15710"/>
        <dbReference type="ChEBI" id="CHEBI:57540"/>
        <dbReference type="ChEBI" id="CHEBI:57945"/>
    </reaction>
    <physiologicalReaction direction="left-to-right" evidence="5">
        <dbReference type="Rhea" id="RHEA:33052"/>
    </physiologicalReaction>
</comment>
<comment type="pathway">
    <text evidence="2">Amine and polyamine biosynthesis; betaine biosynthesis via choline pathway; betaine aldehyde from choline (dehydrogenase route): step 1/1.</text>
</comment>
<comment type="alternative products">
    <event type="alternative initiation"/>
    <isoform>
        <id>P71017-1</id>
        <name>Long</name>
        <sequence type="displayed"/>
    </isoform>
    <isoform>
        <id>P71017-2</id>
        <name>Short</name>
        <sequence type="described" ref="VSP_018637"/>
    </isoform>
    <text evidence="2">Appears to be translated from two alternative initiation sites, at least when overexpressed in E.coli.</text>
</comment>
<comment type="induction">
    <text evidence="1 2">By choline and by high osmolarity in the presence of choline (PubMed:22408163, PubMed:8752328). Repressed by GbsR (PubMed:22408163).</text>
</comment>
<comment type="disruption phenotype">
    <text evidence="2">Deletion of the gbsAB genes abolishes the choline-glycine betaine synthesis pathway and the ability of B.subtilis to deal effectively with high-osmolarity stress in choline- or glycine betaine aldehyde-containing medium.</text>
</comment>
<comment type="similarity">
    <text evidence="4">Belongs to the iron-containing alcohol dehydrogenase family.</text>
</comment>
<comment type="sequence caution" evidence="4">
    <conflict type="erroneous initiation">
        <sequence resource="EMBL-CDS" id="AAC44365"/>
    </conflict>
    <text>Truncated N-terminus.</text>
</comment>
<gene>
    <name evidence="3" type="primary">gbsB</name>
    <name type="ordered locus">BSU31050</name>
</gene>
<proteinExistence type="evidence at protein level"/>
<dbReference type="EC" id="1.1.1.-" evidence="5"/>
<dbReference type="EMBL" id="U47861">
    <property type="protein sequence ID" value="AAC44365.1"/>
    <property type="status" value="ALT_INIT"/>
    <property type="molecule type" value="Genomic_DNA"/>
</dbReference>
<dbReference type="EMBL" id="AL009126">
    <property type="protein sequence ID" value="CAB15083.2"/>
    <property type="molecule type" value="Genomic_DNA"/>
</dbReference>
<dbReference type="PIR" id="B69629">
    <property type="entry name" value="B69629"/>
</dbReference>
<dbReference type="RefSeq" id="NP_390983.2">
    <molecule id="P71017-1"/>
    <property type="nucleotide sequence ID" value="NC_000964.3"/>
</dbReference>
<dbReference type="RefSeq" id="WP_003243227.1">
    <property type="nucleotide sequence ID" value="NZ_OZ025638.1"/>
</dbReference>
<dbReference type="SMR" id="P71017"/>
<dbReference type="FunCoup" id="P71017">
    <property type="interactions" value="447"/>
</dbReference>
<dbReference type="STRING" id="224308.BSU31050"/>
<dbReference type="PaxDb" id="224308-BSU31050"/>
<dbReference type="EnsemblBacteria" id="CAB15083">
    <property type="protein sequence ID" value="CAB15083"/>
    <property type="gene ID" value="BSU_31050"/>
</dbReference>
<dbReference type="GeneID" id="938832"/>
<dbReference type="KEGG" id="bsu:BSU31050"/>
<dbReference type="PATRIC" id="fig|224308.179.peg.3365"/>
<dbReference type="eggNOG" id="COG1454">
    <property type="taxonomic scope" value="Bacteria"/>
</dbReference>
<dbReference type="InParanoid" id="P71017"/>
<dbReference type="OrthoDB" id="9815791at2"/>
<dbReference type="PhylomeDB" id="P71017"/>
<dbReference type="BioCyc" id="BSUB:BSU31050-MONOMER"/>
<dbReference type="BioCyc" id="MetaCyc:MONOMER-8601"/>
<dbReference type="UniPathway" id="UPA00529">
    <property type="reaction ID" value="UER00587"/>
</dbReference>
<dbReference type="Proteomes" id="UP000001570">
    <property type="component" value="Chromosome"/>
</dbReference>
<dbReference type="GO" id="GO:0004022">
    <property type="term" value="F:alcohol dehydrogenase (NAD+) activity"/>
    <property type="evidence" value="ECO:0000318"/>
    <property type="project" value="GO_Central"/>
</dbReference>
<dbReference type="GO" id="GO:0046872">
    <property type="term" value="F:metal ion binding"/>
    <property type="evidence" value="ECO:0007669"/>
    <property type="project" value="InterPro"/>
</dbReference>
<dbReference type="GO" id="GO:0019285">
    <property type="term" value="P:glycine betaine biosynthetic process from choline"/>
    <property type="evidence" value="ECO:0007669"/>
    <property type="project" value="UniProtKB-UniPathway"/>
</dbReference>
<dbReference type="CDD" id="cd08551">
    <property type="entry name" value="Fe-ADH"/>
    <property type="match status" value="1"/>
</dbReference>
<dbReference type="FunFam" id="3.40.50.1970:FF:000003">
    <property type="entry name" value="Alcohol dehydrogenase, iron-containing"/>
    <property type="match status" value="1"/>
</dbReference>
<dbReference type="FunFam" id="1.20.1090.10:FF:000001">
    <property type="entry name" value="Aldehyde-alcohol dehydrogenase"/>
    <property type="match status" value="1"/>
</dbReference>
<dbReference type="Gene3D" id="3.40.50.1970">
    <property type="match status" value="1"/>
</dbReference>
<dbReference type="Gene3D" id="1.20.1090.10">
    <property type="entry name" value="Dehydroquinate synthase-like - alpha domain"/>
    <property type="match status" value="1"/>
</dbReference>
<dbReference type="InterPro" id="IPR001670">
    <property type="entry name" value="ADH_Fe/GldA"/>
</dbReference>
<dbReference type="InterPro" id="IPR056798">
    <property type="entry name" value="ADH_Fe_C"/>
</dbReference>
<dbReference type="InterPro" id="IPR018211">
    <property type="entry name" value="ADH_Fe_CS"/>
</dbReference>
<dbReference type="InterPro" id="IPR039697">
    <property type="entry name" value="Alcohol_dehydrogenase_Fe"/>
</dbReference>
<dbReference type="PANTHER" id="PTHR11496">
    <property type="entry name" value="ALCOHOL DEHYDROGENASE"/>
    <property type="match status" value="1"/>
</dbReference>
<dbReference type="PANTHER" id="PTHR11496:SF102">
    <property type="entry name" value="ALCOHOL DEHYDROGENASE 4"/>
    <property type="match status" value="1"/>
</dbReference>
<dbReference type="Pfam" id="PF25137">
    <property type="entry name" value="ADH_Fe_C"/>
    <property type="match status" value="1"/>
</dbReference>
<dbReference type="Pfam" id="PF00465">
    <property type="entry name" value="Fe-ADH"/>
    <property type="match status" value="1"/>
</dbReference>
<dbReference type="SUPFAM" id="SSF56796">
    <property type="entry name" value="Dehydroquinate synthase-like"/>
    <property type="match status" value="1"/>
</dbReference>
<dbReference type="PROSITE" id="PS00913">
    <property type="entry name" value="ADH_IRON_1"/>
    <property type="match status" value="1"/>
</dbReference>
<dbReference type="PROSITE" id="PS00060">
    <property type="entry name" value="ADH_IRON_2"/>
    <property type="match status" value="1"/>
</dbReference>
<organism>
    <name type="scientific">Bacillus subtilis (strain 168)</name>
    <dbReference type="NCBI Taxonomy" id="224308"/>
    <lineage>
        <taxon>Bacteria</taxon>
        <taxon>Bacillati</taxon>
        <taxon>Bacillota</taxon>
        <taxon>Bacilli</taxon>
        <taxon>Bacillales</taxon>
        <taxon>Bacillaceae</taxon>
        <taxon>Bacillus</taxon>
    </lineage>
</organism>
<protein>
    <recommendedName>
        <fullName evidence="4">Choline dehydrogenase</fullName>
        <ecNumber evidence="5">1.1.1.-</ecNumber>
    </recommendedName>
    <alternativeName>
        <fullName evidence="3">Alcohol dehydrogenase</fullName>
    </alternativeName>
</protein>
<name>GBSB_BACSU</name>
<evidence type="ECO:0000269" key="1">
    <source>
    </source>
</evidence>
<evidence type="ECO:0000269" key="2">
    <source>
    </source>
</evidence>
<evidence type="ECO:0000303" key="3">
    <source>
    </source>
</evidence>
<evidence type="ECO:0000305" key="4"/>
<evidence type="ECO:0000305" key="5">
    <source>
    </source>
</evidence>
<sequence>MTLNMKVESMQKFHTFEIPTVIKHGIGAIKHTGEEVAALGVSKALLVTDPGIYKAGVADPVIESLKEAGIEVVLFNKVEPNPPVRLVNEGSELYKKENCNGLVAVGGGSSMDTAKAIGVEATHEGSVLDYEAADGKKPLENRIPPLTTIPTTAGTGSEVTQWAVITDEEREFKFNTGGPLIAAHLTIIDPELHVSMPPHVTAMTGIDALAHAIECYTMKFAQPITDAVALMAIEYAAHYIKRAFADGEDLEARYGMAQAAMLAGLSYGSESAGAAHAMSQTLGGIIPVAHGQCVAAMMGPVMEYNWKGYPEKFARIAKAFGIDTSKMTTEEAAKASVNWMYDLVEDLEVPTLEEQGVSPDMIERLSKEAMKDPQTFGNPRDLNEKAYNWIYKRCFNLTPKTV</sequence>
<accession>P71017</accession>
<reference key="1">
    <citation type="journal article" date="1996" name="J. Bacteriol.">
        <title>Synthesis of the osmoprotectant glycine betaine in Bacillus subtilis: characterization of the gbsAB genes.</title>
        <authorList>
            <person name="Boch J."/>
            <person name="Kempf B."/>
            <person name="Schmid R."/>
            <person name="Bremer E."/>
        </authorList>
    </citation>
    <scope>NUCLEOTIDE SEQUENCE [GENOMIC DNA]</scope>
    <scope>PROTEIN SEQUENCE OF N-TERMINUS</scope>
    <scope>FUNCTION</scope>
    <scope>CATALYTIC ACTIVITY</scope>
    <scope>PATHWAY</scope>
    <scope>INDUCTION</scope>
    <scope>DISRUPTION PHENOTYPE</scope>
    <scope>ALTERNATIVE INITIATION</scope>
    <source>
        <strain>168 / JH642</strain>
    </source>
</reference>
<reference key="2">
    <citation type="journal article" date="1997" name="Nature">
        <title>The complete genome sequence of the Gram-positive bacterium Bacillus subtilis.</title>
        <authorList>
            <person name="Kunst F."/>
            <person name="Ogasawara N."/>
            <person name="Moszer I."/>
            <person name="Albertini A.M."/>
            <person name="Alloni G."/>
            <person name="Azevedo V."/>
            <person name="Bertero M.G."/>
            <person name="Bessieres P."/>
            <person name="Bolotin A."/>
            <person name="Borchert S."/>
            <person name="Borriss R."/>
            <person name="Boursier L."/>
            <person name="Brans A."/>
            <person name="Braun M."/>
            <person name="Brignell S.C."/>
            <person name="Bron S."/>
            <person name="Brouillet S."/>
            <person name="Bruschi C.V."/>
            <person name="Caldwell B."/>
            <person name="Capuano V."/>
            <person name="Carter N.M."/>
            <person name="Choi S.-K."/>
            <person name="Codani J.-J."/>
            <person name="Connerton I.F."/>
            <person name="Cummings N.J."/>
            <person name="Daniel R.A."/>
            <person name="Denizot F."/>
            <person name="Devine K.M."/>
            <person name="Duesterhoeft A."/>
            <person name="Ehrlich S.D."/>
            <person name="Emmerson P.T."/>
            <person name="Entian K.-D."/>
            <person name="Errington J."/>
            <person name="Fabret C."/>
            <person name="Ferrari E."/>
            <person name="Foulger D."/>
            <person name="Fritz C."/>
            <person name="Fujita M."/>
            <person name="Fujita Y."/>
            <person name="Fuma S."/>
            <person name="Galizzi A."/>
            <person name="Galleron N."/>
            <person name="Ghim S.-Y."/>
            <person name="Glaser P."/>
            <person name="Goffeau A."/>
            <person name="Golightly E.J."/>
            <person name="Grandi G."/>
            <person name="Guiseppi G."/>
            <person name="Guy B.J."/>
            <person name="Haga K."/>
            <person name="Haiech J."/>
            <person name="Harwood C.R."/>
            <person name="Henaut A."/>
            <person name="Hilbert H."/>
            <person name="Holsappel S."/>
            <person name="Hosono S."/>
            <person name="Hullo M.-F."/>
            <person name="Itaya M."/>
            <person name="Jones L.-M."/>
            <person name="Joris B."/>
            <person name="Karamata D."/>
            <person name="Kasahara Y."/>
            <person name="Klaerr-Blanchard M."/>
            <person name="Klein C."/>
            <person name="Kobayashi Y."/>
            <person name="Koetter P."/>
            <person name="Koningstein G."/>
            <person name="Krogh S."/>
            <person name="Kumano M."/>
            <person name="Kurita K."/>
            <person name="Lapidus A."/>
            <person name="Lardinois S."/>
            <person name="Lauber J."/>
            <person name="Lazarevic V."/>
            <person name="Lee S.-M."/>
            <person name="Levine A."/>
            <person name="Liu H."/>
            <person name="Masuda S."/>
            <person name="Mauel C."/>
            <person name="Medigue C."/>
            <person name="Medina N."/>
            <person name="Mellado R.P."/>
            <person name="Mizuno M."/>
            <person name="Moestl D."/>
            <person name="Nakai S."/>
            <person name="Noback M."/>
            <person name="Noone D."/>
            <person name="O'Reilly M."/>
            <person name="Ogawa K."/>
            <person name="Ogiwara A."/>
            <person name="Oudega B."/>
            <person name="Park S.-H."/>
            <person name="Parro V."/>
            <person name="Pohl T.M."/>
            <person name="Portetelle D."/>
            <person name="Porwollik S."/>
            <person name="Prescott A.M."/>
            <person name="Presecan E."/>
            <person name="Pujic P."/>
            <person name="Purnelle B."/>
            <person name="Rapoport G."/>
            <person name="Rey M."/>
            <person name="Reynolds S."/>
            <person name="Rieger M."/>
            <person name="Rivolta C."/>
            <person name="Rocha E."/>
            <person name="Roche B."/>
            <person name="Rose M."/>
            <person name="Sadaie Y."/>
            <person name="Sato T."/>
            <person name="Scanlan E."/>
            <person name="Schleich S."/>
            <person name="Schroeter R."/>
            <person name="Scoffone F."/>
            <person name="Sekiguchi J."/>
            <person name="Sekowska A."/>
            <person name="Seror S.J."/>
            <person name="Serror P."/>
            <person name="Shin B.-S."/>
            <person name="Soldo B."/>
            <person name="Sorokin A."/>
            <person name="Tacconi E."/>
            <person name="Takagi T."/>
            <person name="Takahashi H."/>
            <person name="Takemaru K."/>
            <person name="Takeuchi M."/>
            <person name="Tamakoshi A."/>
            <person name="Tanaka T."/>
            <person name="Terpstra P."/>
            <person name="Tognoni A."/>
            <person name="Tosato V."/>
            <person name="Uchiyama S."/>
            <person name="Vandenbol M."/>
            <person name="Vannier F."/>
            <person name="Vassarotti A."/>
            <person name="Viari A."/>
            <person name="Wambutt R."/>
            <person name="Wedler E."/>
            <person name="Wedler H."/>
            <person name="Weitzenegger T."/>
            <person name="Winters P."/>
            <person name="Wipat A."/>
            <person name="Yamamoto H."/>
            <person name="Yamane K."/>
            <person name="Yasumoto K."/>
            <person name="Yata K."/>
            <person name="Yoshida K."/>
            <person name="Yoshikawa H.-F."/>
            <person name="Zumstein E."/>
            <person name="Yoshikawa H."/>
            <person name="Danchin A."/>
        </authorList>
    </citation>
    <scope>NUCLEOTIDE SEQUENCE [LARGE SCALE GENOMIC DNA]</scope>
    <source>
        <strain>168</strain>
    </source>
</reference>
<reference key="3">
    <citation type="journal article" date="2009" name="Microbiology">
        <title>From a consortium sequence to a unified sequence: the Bacillus subtilis 168 reference genome a decade later.</title>
        <authorList>
            <person name="Barbe V."/>
            <person name="Cruveiller S."/>
            <person name="Kunst F."/>
            <person name="Lenoble P."/>
            <person name="Meurice G."/>
            <person name="Sekowska A."/>
            <person name="Vallenet D."/>
            <person name="Wang T."/>
            <person name="Moszer I."/>
            <person name="Medigue C."/>
            <person name="Danchin A."/>
        </authorList>
    </citation>
    <scope>SEQUENCE REVISION TO N-TERMINUS</scope>
</reference>
<reference key="4">
    <citation type="journal article" date="2012" name="J. Bacteriol.">
        <title>Genetic control of osmoadaptive glycine betaine synthesis in Bacillus subtilis through the choline-sensing and glycine betaine-responsive GbsR repressor.</title>
        <authorList>
            <person name="Nau-Wagner G."/>
            <person name="Opper D."/>
            <person name="Rolbetzki A."/>
            <person name="Boch J."/>
            <person name="Kempf B."/>
            <person name="Hoffmann T."/>
            <person name="Bremer E."/>
        </authorList>
    </citation>
    <scope>INDUCTION</scope>
    <source>
        <strain>168 / JH642</strain>
    </source>
</reference>
<keyword id="KW-0024">Alternative initiation</keyword>
<keyword id="KW-0903">Direct protein sequencing</keyword>
<keyword id="KW-0520">NAD</keyword>
<keyword id="KW-0560">Oxidoreductase</keyword>
<keyword id="KW-1185">Reference proteome</keyword>